<organism>
    <name type="scientific">Porphyra purpurea</name>
    <name type="common">Red seaweed</name>
    <name type="synonym">Ulva purpurea</name>
    <dbReference type="NCBI Taxonomy" id="2787"/>
    <lineage>
        <taxon>Eukaryota</taxon>
        <taxon>Rhodophyta</taxon>
        <taxon>Bangiophyceae</taxon>
        <taxon>Bangiales</taxon>
        <taxon>Bangiaceae</taxon>
        <taxon>Porphyra</taxon>
    </lineage>
</organism>
<gene>
    <name type="primary">psaK</name>
</gene>
<sequence>MDILFVLSAVPHTSPWSTQVAMVMITCNLLAIVAGRYAIKVRGLGPSIPVSGVEGFGLPELLATTSLGHVIGAASILGLSNVGLIS</sequence>
<evidence type="ECO:0000250" key="1"/>
<evidence type="ECO:0000255" key="2"/>
<evidence type="ECO:0000305" key="3"/>
<proteinExistence type="inferred from homology"/>
<dbReference type="EMBL" id="U38804">
    <property type="protein sequence ID" value="AAC08256.1"/>
    <property type="molecule type" value="Genomic_DNA"/>
</dbReference>
<dbReference type="PIR" id="S73291">
    <property type="entry name" value="S73291"/>
</dbReference>
<dbReference type="RefSeq" id="NP_053980.1">
    <property type="nucleotide sequence ID" value="NC_000925.1"/>
</dbReference>
<dbReference type="SMR" id="P51370"/>
<dbReference type="GeneID" id="810010"/>
<dbReference type="GO" id="GO:0009535">
    <property type="term" value="C:chloroplast thylakoid membrane"/>
    <property type="evidence" value="ECO:0007669"/>
    <property type="project" value="UniProtKB-SubCell"/>
</dbReference>
<dbReference type="GO" id="GO:0009522">
    <property type="term" value="C:photosystem I"/>
    <property type="evidence" value="ECO:0007669"/>
    <property type="project" value="UniProtKB-KW"/>
</dbReference>
<dbReference type="GO" id="GO:0015979">
    <property type="term" value="P:photosynthesis"/>
    <property type="evidence" value="ECO:0007669"/>
    <property type="project" value="UniProtKB-UniRule"/>
</dbReference>
<dbReference type="Gene3D" id="1.20.860.20">
    <property type="entry name" value="Photosystem I PsaK, reaction centre"/>
    <property type="match status" value="1"/>
</dbReference>
<dbReference type="HAMAP" id="MF_00474">
    <property type="entry name" value="PSI_PsaK"/>
    <property type="match status" value="1"/>
</dbReference>
<dbReference type="InterPro" id="IPR035982">
    <property type="entry name" value="PSI_centre_PsaK_sf"/>
</dbReference>
<dbReference type="InterPro" id="IPR000549">
    <property type="entry name" value="PSI_PsaG/PsaK"/>
</dbReference>
<dbReference type="InterPro" id="IPR017492">
    <property type="entry name" value="PSI_PsaK"/>
</dbReference>
<dbReference type="InterPro" id="IPR037101">
    <property type="entry name" value="PSI_PsaK_bact"/>
</dbReference>
<dbReference type="NCBIfam" id="TIGR03049">
    <property type="entry name" value="PS_I_psaK"/>
    <property type="match status" value="1"/>
</dbReference>
<dbReference type="Pfam" id="PF01241">
    <property type="entry name" value="PSI_PSAK"/>
    <property type="match status" value="1"/>
</dbReference>
<dbReference type="SUPFAM" id="SSF81563">
    <property type="entry name" value="Photosystem I reaction center subunit X, PsaK"/>
    <property type="match status" value="1"/>
</dbReference>
<dbReference type="PROSITE" id="PS01026">
    <property type="entry name" value="PHOTOSYSTEM_I_PSAGK"/>
    <property type="match status" value="1"/>
</dbReference>
<accession>P51370</accession>
<feature type="chain" id="PRO_0000206216" description="Photosystem I reaction center subunit PsaK">
    <location>
        <begin position="1"/>
        <end position="86"/>
    </location>
</feature>
<feature type="transmembrane region" description="Helical" evidence="2">
    <location>
        <begin position="20"/>
        <end position="39"/>
    </location>
</feature>
<feature type="transmembrane region" description="Helical" evidence="2">
    <location>
        <begin position="61"/>
        <end position="79"/>
    </location>
</feature>
<protein>
    <recommendedName>
        <fullName>Photosystem I reaction center subunit PsaK</fullName>
    </recommendedName>
    <alternativeName>
        <fullName>PSI-K</fullName>
    </alternativeName>
    <alternativeName>
        <fullName>Photosystem I subunit X</fullName>
    </alternativeName>
</protein>
<geneLocation type="chloroplast"/>
<comment type="subcellular location">
    <subcellularLocation>
        <location evidence="1">Plastid</location>
        <location evidence="1">Chloroplast thylakoid membrane</location>
        <topology evidence="1">Multi-pass membrane protein</topology>
    </subcellularLocation>
</comment>
<comment type="similarity">
    <text evidence="3">Belongs to the PsaG/PsaK family.</text>
</comment>
<keyword id="KW-0150">Chloroplast</keyword>
<keyword id="KW-0472">Membrane</keyword>
<keyword id="KW-0602">Photosynthesis</keyword>
<keyword id="KW-0603">Photosystem I</keyword>
<keyword id="KW-0934">Plastid</keyword>
<keyword id="KW-0793">Thylakoid</keyword>
<keyword id="KW-0812">Transmembrane</keyword>
<keyword id="KW-1133">Transmembrane helix</keyword>
<reference key="1">
    <citation type="journal article" date="1995" name="Plant Mol. Biol. Rep.">
        <title>Complete nucleotide sequence of the Porphyra purpurea chloroplast genome.</title>
        <authorList>
            <person name="Reith M.E."/>
            <person name="Munholland J."/>
        </authorList>
    </citation>
    <scope>NUCLEOTIDE SEQUENCE [LARGE SCALE GENOMIC DNA]</scope>
    <source>
        <strain>Avonport</strain>
    </source>
</reference>
<name>PSAK_PORPU</name>